<protein>
    <recommendedName>
        <fullName evidence="1">Serine--tRNA ligase</fullName>
        <ecNumber evidence="1">6.1.1.11</ecNumber>
    </recommendedName>
    <alternativeName>
        <fullName evidence="1">Seryl-tRNA synthetase</fullName>
        <shortName evidence="1">SerRS</shortName>
    </alternativeName>
    <alternativeName>
        <fullName evidence="1">Seryl-tRNA(Ser/Sec) synthetase</fullName>
    </alternativeName>
</protein>
<evidence type="ECO:0000255" key="1">
    <source>
        <dbReference type="HAMAP-Rule" id="MF_00176"/>
    </source>
</evidence>
<accession>Q7VG34</accession>
<name>SYS_HELHP</name>
<comment type="function">
    <text evidence="1">Catalyzes the attachment of serine to tRNA(Ser). Is also able to aminoacylate tRNA(Sec) with serine, to form the misacylated tRNA L-seryl-tRNA(Sec), which will be further converted into selenocysteinyl-tRNA(Sec).</text>
</comment>
<comment type="catalytic activity">
    <reaction evidence="1">
        <text>tRNA(Ser) + L-serine + ATP = L-seryl-tRNA(Ser) + AMP + diphosphate + H(+)</text>
        <dbReference type="Rhea" id="RHEA:12292"/>
        <dbReference type="Rhea" id="RHEA-COMP:9669"/>
        <dbReference type="Rhea" id="RHEA-COMP:9703"/>
        <dbReference type="ChEBI" id="CHEBI:15378"/>
        <dbReference type="ChEBI" id="CHEBI:30616"/>
        <dbReference type="ChEBI" id="CHEBI:33019"/>
        <dbReference type="ChEBI" id="CHEBI:33384"/>
        <dbReference type="ChEBI" id="CHEBI:78442"/>
        <dbReference type="ChEBI" id="CHEBI:78533"/>
        <dbReference type="ChEBI" id="CHEBI:456215"/>
        <dbReference type="EC" id="6.1.1.11"/>
    </reaction>
</comment>
<comment type="catalytic activity">
    <reaction evidence="1">
        <text>tRNA(Sec) + L-serine + ATP = L-seryl-tRNA(Sec) + AMP + diphosphate + H(+)</text>
        <dbReference type="Rhea" id="RHEA:42580"/>
        <dbReference type="Rhea" id="RHEA-COMP:9742"/>
        <dbReference type="Rhea" id="RHEA-COMP:10128"/>
        <dbReference type="ChEBI" id="CHEBI:15378"/>
        <dbReference type="ChEBI" id="CHEBI:30616"/>
        <dbReference type="ChEBI" id="CHEBI:33019"/>
        <dbReference type="ChEBI" id="CHEBI:33384"/>
        <dbReference type="ChEBI" id="CHEBI:78442"/>
        <dbReference type="ChEBI" id="CHEBI:78533"/>
        <dbReference type="ChEBI" id="CHEBI:456215"/>
        <dbReference type="EC" id="6.1.1.11"/>
    </reaction>
</comment>
<comment type="pathway">
    <text evidence="1">Aminoacyl-tRNA biosynthesis; selenocysteinyl-tRNA(Sec) biosynthesis; L-seryl-tRNA(Sec) from L-serine and tRNA(Sec): step 1/1.</text>
</comment>
<comment type="subunit">
    <text evidence="1">Homodimer. The tRNA molecule binds across the dimer.</text>
</comment>
<comment type="subcellular location">
    <subcellularLocation>
        <location evidence="1">Cytoplasm</location>
    </subcellularLocation>
</comment>
<comment type="domain">
    <text evidence="1">Consists of two distinct domains, a catalytic core and a N-terminal extension that is involved in tRNA binding.</text>
</comment>
<comment type="similarity">
    <text evidence="1">Belongs to the class-II aminoacyl-tRNA synthetase family. Type-1 seryl-tRNA synthetase subfamily.</text>
</comment>
<sequence>MIDTKALINQFDEIKSRLAIKKVSEETLSALKDMALKYKSCKQELEELQAFQNKTSKLFGEYKREQKDITALKVALDENKVKMSTLESTLKEIESHLETLAYGIPNLPDDATPEGEDENDNVEIKKVLSPPHFDFVPKEHWELGIANGWIDFEAGVKLAKSRFSVLRGMGAKLNRALINFMLDYNEKAGFESIVTPVIVNARALFGTGQLPKFEEDMFKVDSHFCDEQSEHDLYLISTSEITLTNLYQDSIIPSEELPIMLTAQTPCFRKEAGSAGRDTRGMIRQHQFDKVELVAITHPTQSAAMQEKMVQTASEILSELKLPHRLMQLCGGDLGFSASNTIDIEVWLPGQNCYREISSISNTRDFQARRAKIRYKENGKNALVHTLNGSSLAVGRTLIAIMENYQQVDGSVMIPEVLQKYL</sequence>
<organism>
    <name type="scientific">Helicobacter hepaticus (strain ATCC 51449 / 3B1)</name>
    <dbReference type="NCBI Taxonomy" id="235279"/>
    <lineage>
        <taxon>Bacteria</taxon>
        <taxon>Pseudomonadati</taxon>
        <taxon>Campylobacterota</taxon>
        <taxon>Epsilonproteobacteria</taxon>
        <taxon>Campylobacterales</taxon>
        <taxon>Helicobacteraceae</taxon>
        <taxon>Helicobacter</taxon>
    </lineage>
</organism>
<proteinExistence type="inferred from homology"/>
<dbReference type="EC" id="6.1.1.11" evidence="1"/>
<dbReference type="EMBL" id="AE017125">
    <property type="protein sequence ID" value="AAP78087.1"/>
    <property type="molecule type" value="Genomic_DNA"/>
</dbReference>
<dbReference type="RefSeq" id="WP_011116330.1">
    <property type="nucleotide sequence ID" value="NC_004917.1"/>
</dbReference>
<dbReference type="SMR" id="Q7VG34"/>
<dbReference type="STRING" id="235279.HH_1490"/>
<dbReference type="KEGG" id="hhe:HH_1490"/>
<dbReference type="eggNOG" id="COG0172">
    <property type="taxonomic scope" value="Bacteria"/>
</dbReference>
<dbReference type="HOGENOM" id="CLU_023797_1_1_7"/>
<dbReference type="OrthoDB" id="9804647at2"/>
<dbReference type="UniPathway" id="UPA00906">
    <property type="reaction ID" value="UER00895"/>
</dbReference>
<dbReference type="Proteomes" id="UP000002495">
    <property type="component" value="Chromosome"/>
</dbReference>
<dbReference type="GO" id="GO:0005737">
    <property type="term" value="C:cytoplasm"/>
    <property type="evidence" value="ECO:0007669"/>
    <property type="project" value="UniProtKB-SubCell"/>
</dbReference>
<dbReference type="GO" id="GO:0005524">
    <property type="term" value="F:ATP binding"/>
    <property type="evidence" value="ECO:0007669"/>
    <property type="project" value="UniProtKB-UniRule"/>
</dbReference>
<dbReference type="GO" id="GO:0004828">
    <property type="term" value="F:serine-tRNA ligase activity"/>
    <property type="evidence" value="ECO:0007669"/>
    <property type="project" value="UniProtKB-UniRule"/>
</dbReference>
<dbReference type="GO" id="GO:0016260">
    <property type="term" value="P:selenocysteine biosynthetic process"/>
    <property type="evidence" value="ECO:0007669"/>
    <property type="project" value="UniProtKB-UniRule"/>
</dbReference>
<dbReference type="GO" id="GO:0006434">
    <property type="term" value="P:seryl-tRNA aminoacylation"/>
    <property type="evidence" value="ECO:0007669"/>
    <property type="project" value="UniProtKB-UniRule"/>
</dbReference>
<dbReference type="CDD" id="cd00770">
    <property type="entry name" value="SerRS_core"/>
    <property type="match status" value="1"/>
</dbReference>
<dbReference type="Gene3D" id="3.30.930.10">
    <property type="entry name" value="Bira Bifunctional Protein, Domain 2"/>
    <property type="match status" value="1"/>
</dbReference>
<dbReference type="Gene3D" id="1.10.287.40">
    <property type="entry name" value="Serine-tRNA synthetase, tRNA binding domain"/>
    <property type="match status" value="1"/>
</dbReference>
<dbReference type="HAMAP" id="MF_00176">
    <property type="entry name" value="Ser_tRNA_synth_type1"/>
    <property type="match status" value="1"/>
</dbReference>
<dbReference type="InterPro" id="IPR002314">
    <property type="entry name" value="aa-tRNA-synt_IIb"/>
</dbReference>
<dbReference type="InterPro" id="IPR006195">
    <property type="entry name" value="aa-tRNA-synth_II"/>
</dbReference>
<dbReference type="InterPro" id="IPR045864">
    <property type="entry name" value="aa-tRNA-synth_II/BPL/LPL"/>
</dbReference>
<dbReference type="InterPro" id="IPR002317">
    <property type="entry name" value="Ser-tRNA-ligase_type_1"/>
</dbReference>
<dbReference type="InterPro" id="IPR015866">
    <property type="entry name" value="Ser-tRNA-synth_1_N"/>
</dbReference>
<dbReference type="InterPro" id="IPR042103">
    <property type="entry name" value="SerRS_1_N_sf"/>
</dbReference>
<dbReference type="InterPro" id="IPR033729">
    <property type="entry name" value="SerRS_core"/>
</dbReference>
<dbReference type="InterPro" id="IPR010978">
    <property type="entry name" value="tRNA-bd_arm"/>
</dbReference>
<dbReference type="NCBIfam" id="TIGR00414">
    <property type="entry name" value="serS"/>
    <property type="match status" value="1"/>
</dbReference>
<dbReference type="PANTHER" id="PTHR43697:SF1">
    <property type="entry name" value="SERINE--TRNA LIGASE"/>
    <property type="match status" value="1"/>
</dbReference>
<dbReference type="PANTHER" id="PTHR43697">
    <property type="entry name" value="SERYL-TRNA SYNTHETASE"/>
    <property type="match status" value="1"/>
</dbReference>
<dbReference type="Pfam" id="PF02403">
    <property type="entry name" value="Seryl_tRNA_N"/>
    <property type="match status" value="1"/>
</dbReference>
<dbReference type="Pfam" id="PF00587">
    <property type="entry name" value="tRNA-synt_2b"/>
    <property type="match status" value="1"/>
</dbReference>
<dbReference type="PIRSF" id="PIRSF001529">
    <property type="entry name" value="Ser-tRNA-synth_IIa"/>
    <property type="match status" value="1"/>
</dbReference>
<dbReference type="PRINTS" id="PR00981">
    <property type="entry name" value="TRNASYNTHSER"/>
</dbReference>
<dbReference type="SUPFAM" id="SSF55681">
    <property type="entry name" value="Class II aaRS and biotin synthetases"/>
    <property type="match status" value="1"/>
</dbReference>
<dbReference type="SUPFAM" id="SSF46589">
    <property type="entry name" value="tRNA-binding arm"/>
    <property type="match status" value="1"/>
</dbReference>
<dbReference type="PROSITE" id="PS50862">
    <property type="entry name" value="AA_TRNA_LIGASE_II"/>
    <property type="match status" value="1"/>
</dbReference>
<reference key="1">
    <citation type="journal article" date="2003" name="Proc. Natl. Acad. Sci. U.S.A.">
        <title>The complete genome sequence of the carcinogenic bacterium Helicobacter hepaticus.</title>
        <authorList>
            <person name="Suerbaum S."/>
            <person name="Josenhans C."/>
            <person name="Sterzenbach T."/>
            <person name="Drescher B."/>
            <person name="Brandt P."/>
            <person name="Bell M."/>
            <person name="Droege M."/>
            <person name="Fartmann B."/>
            <person name="Fischer H.-P."/>
            <person name="Ge Z."/>
            <person name="Hoerster A."/>
            <person name="Holland R."/>
            <person name="Klein K."/>
            <person name="Koenig J."/>
            <person name="Macko L."/>
            <person name="Mendz G.L."/>
            <person name="Nyakatura G."/>
            <person name="Schauer D.B."/>
            <person name="Shen Z."/>
            <person name="Weber J."/>
            <person name="Frosch M."/>
            <person name="Fox J.G."/>
        </authorList>
    </citation>
    <scope>NUCLEOTIDE SEQUENCE [LARGE SCALE GENOMIC DNA]</scope>
    <source>
        <strain>ATCC 51449 / 3B1</strain>
    </source>
</reference>
<feature type="chain" id="PRO_0000122058" description="Serine--tRNA ligase">
    <location>
        <begin position="1"/>
        <end position="422"/>
    </location>
</feature>
<feature type="binding site" evidence="1">
    <location>
        <begin position="238"/>
        <end position="240"/>
    </location>
    <ligand>
        <name>L-serine</name>
        <dbReference type="ChEBI" id="CHEBI:33384"/>
    </ligand>
</feature>
<feature type="binding site" evidence="1">
    <location>
        <begin position="269"/>
        <end position="271"/>
    </location>
    <ligand>
        <name>ATP</name>
        <dbReference type="ChEBI" id="CHEBI:30616"/>
    </ligand>
</feature>
<feature type="binding site" evidence="1">
    <location>
        <position position="292"/>
    </location>
    <ligand>
        <name>L-serine</name>
        <dbReference type="ChEBI" id="CHEBI:33384"/>
    </ligand>
</feature>
<feature type="binding site" evidence="1">
    <location>
        <begin position="356"/>
        <end position="359"/>
    </location>
    <ligand>
        <name>ATP</name>
        <dbReference type="ChEBI" id="CHEBI:30616"/>
    </ligand>
</feature>
<feature type="binding site" evidence="1">
    <location>
        <position position="390"/>
    </location>
    <ligand>
        <name>L-serine</name>
        <dbReference type="ChEBI" id="CHEBI:33384"/>
    </ligand>
</feature>
<gene>
    <name evidence="1" type="primary">serS</name>
    <name type="ordered locus">HH_1490</name>
</gene>
<keyword id="KW-0030">Aminoacyl-tRNA synthetase</keyword>
<keyword id="KW-0067">ATP-binding</keyword>
<keyword id="KW-0963">Cytoplasm</keyword>
<keyword id="KW-0436">Ligase</keyword>
<keyword id="KW-0547">Nucleotide-binding</keyword>
<keyword id="KW-0648">Protein biosynthesis</keyword>
<keyword id="KW-1185">Reference proteome</keyword>